<organism>
    <name type="scientific">Pseudomonas putida (strain ATCC 700007 / DSM 6899 / JCM 31910 / BCRC 17059 / LMG 24140 / F1)</name>
    <dbReference type="NCBI Taxonomy" id="351746"/>
    <lineage>
        <taxon>Bacteria</taxon>
        <taxon>Pseudomonadati</taxon>
        <taxon>Pseudomonadota</taxon>
        <taxon>Gammaproteobacteria</taxon>
        <taxon>Pseudomonadales</taxon>
        <taxon>Pseudomonadaceae</taxon>
        <taxon>Pseudomonas</taxon>
    </lineage>
</organism>
<dbReference type="EC" id="2.1.1.228" evidence="1"/>
<dbReference type="EMBL" id="CP000712">
    <property type="protein sequence ID" value="ABQ80381.1"/>
    <property type="molecule type" value="Genomic_DNA"/>
</dbReference>
<dbReference type="SMR" id="A5W8C1"/>
<dbReference type="KEGG" id="ppf:Pput_4257"/>
<dbReference type="eggNOG" id="COG0336">
    <property type="taxonomic scope" value="Bacteria"/>
</dbReference>
<dbReference type="HOGENOM" id="CLU_047363_0_2_6"/>
<dbReference type="GO" id="GO:0005829">
    <property type="term" value="C:cytosol"/>
    <property type="evidence" value="ECO:0007669"/>
    <property type="project" value="TreeGrafter"/>
</dbReference>
<dbReference type="GO" id="GO:0052906">
    <property type="term" value="F:tRNA (guanine(37)-N1)-methyltransferase activity"/>
    <property type="evidence" value="ECO:0007669"/>
    <property type="project" value="UniProtKB-UniRule"/>
</dbReference>
<dbReference type="GO" id="GO:0002939">
    <property type="term" value="P:tRNA N1-guanine methylation"/>
    <property type="evidence" value="ECO:0007669"/>
    <property type="project" value="TreeGrafter"/>
</dbReference>
<dbReference type="CDD" id="cd18080">
    <property type="entry name" value="TrmD-like"/>
    <property type="match status" value="1"/>
</dbReference>
<dbReference type="FunFam" id="1.10.1270.20:FF:000001">
    <property type="entry name" value="tRNA (guanine-N(1)-)-methyltransferase"/>
    <property type="match status" value="1"/>
</dbReference>
<dbReference type="FunFam" id="3.40.1280.10:FF:000001">
    <property type="entry name" value="tRNA (guanine-N(1)-)-methyltransferase"/>
    <property type="match status" value="1"/>
</dbReference>
<dbReference type="Gene3D" id="3.40.1280.10">
    <property type="match status" value="1"/>
</dbReference>
<dbReference type="Gene3D" id="1.10.1270.20">
    <property type="entry name" value="tRNA(m1g37)methyltransferase, domain 2"/>
    <property type="match status" value="1"/>
</dbReference>
<dbReference type="HAMAP" id="MF_00605">
    <property type="entry name" value="TrmD"/>
    <property type="match status" value="1"/>
</dbReference>
<dbReference type="InterPro" id="IPR029028">
    <property type="entry name" value="Alpha/beta_knot_MTases"/>
</dbReference>
<dbReference type="InterPro" id="IPR023148">
    <property type="entry name" value="tRNA_m1G_MeTrfase_C_sf"/>
</dbReference>
<dbReference type="InterPro" id="IPR002649">
    <property type="entry name" value="tRNA_m1G_MeTrfase_TrmD"/>
</dbReference>
<dbReference type="InterPro" id="IPR029026">
    <property type="entry name" value="tRNA_m1G_MTases_N"/>
</dbReference>
<dbReference type="InterPro" id="IPR016009">
    <property type="entry name" value="tRNA_MeTrfase_TRMD/TRM10"/>
</dbReference>
<dbReference type="NCBIfam" id="NF000648">
    <property type="entry name" value="PRK00026.1"/>
    <property type="match status" value="1"/>
</dbReference>
<dbReference type="NCBIfam" id="TIGR00088">
    <property type="entry name" value="trmD"/>
    <property type="match status" value="1"/>
</dbReference>
<dbReference type="PANTHER" id="PTHR46417">
    <property type="entry name" value="TRNA (GUANINE-N(1)-)-METHYLTRANSFERASE"/>
    <property type="match status" value="1"/>
</dbReference>
<dbReference type="PANTHER" id="PTHR46417:SF1">
    <property type="entry name" value="TRNA (GUANINE-N(1)-)-METHYLTRANSFERASE"/>
    <property type="match status" value="1"/>
</dbReference>
<dbReference type="Pfam" id="PF01746">
    <property type="entry name" value="tRNA_m1G_MT"/>
    <property type="match status" value="1"/>
</dbReference>
<dbReference type="PIRSF" id="PIRSF000386">
    <property type="entry name" value="tRNA_mtase"/>
    <property type="match status" value="1"/>
</dbReference>
<dbReference type="SUPFAM" id="SSF75217">
    <property type="entry name" value="alpha/beta knot"/>
    <property type="match status" value="1"/>
</dbReference>
<keyword id="KW-0963">Cytoplasm</keyword>
<keyword id="KW-0489">Methyltransferase</keyword>
<keyword id="KW-0949">S-adenosyl-L-methionine</keyword>
<keyword id="KW-0808">Transferase</keyword>
<keyword id="KW-0819">tRNA processing</keyword>
<reference key="1">
    <citation type="submission" date="2007-05" db="EMBL/GenBank/DDBJ databases">
        <title>Complete sequence of Pseudomonas putida F1.</title>
        <authorList>
            <consortium name="US DOE Joint Genome Institute"/>
            <person name="Copeland A."/>
            <person name="Lucas S."/>
            <person name="Lapidus A."/>
            <person name="Barry K."/>
            <person name="Detter J.C."/>
            <person name="Glavina del Rio T."/>
            <person name="Hammon N."/>
            <person name="Israni S."/>
            <person name="Dalin E."/>
            <person name="Tice H."/>
            <person name="Pitluck S."/>
            <person name="Chain P."/>
            <person name="Malfatti S."/>
            <person name="Shin M."/>
            <person name="Vergez L."/>
            <person name="Schmutz J."/>
            <person name="Larimer F."/>
            <person name="Land M."/>
            <person name="Hauser L."/>
            <person name="Kyrpides N."/>
            <person name="Lykidis A."/>
            <person name="Parales R."/>
            <person name="Richardson P."/>
        </authorList>
    </citation>
    <scope>NUCLEOTIDE SEQUENCE [LARGE SCALE GENOMIC DNA]</scope>
    <source>
        <strain>ATCC 700007 / DSM 6899 / JCM 31910 / BCRC 17059 / LMG 24140 / F1</strain>
    </source>
</reference>
<name>TRMD_PSEP1</name>
<feature type="chain" id="PRO_1000006505" description="tRNA (guanine-N(1)-)-methyltransferase">
    <location>
        <begin position="1"/>
        <end position="250"/>
    </location>
</feature>
<feature type="binding site" evidence="1">
    <location>
        <position position="116"/>
    </location>
    <ligand>
        <name>S-adenosyl-L-methionine</name>
        <dbReference type="ChEBI" id="CHEBI:59789"/>
    </ligand>
</feature>
<feature type="binding site" evidence="1">
    <location>
        <begin position="136"/>
        <end position="141"/>
    </location>
    <ligand>
        <name>S-adenosyl-L-methionine</name>
        <dbReference type="ChEBI" id="CHEBI:59789"/>
    </ligand>
</feature>
<proteinExistence type="inferred from homology"/>
<comment type="function">
    <text evidence="1">Specifically methylates guanosine-37 in various tRNAs.</text>
</comment>
<comment type="catalytic activity">
    <reaction evidence="1">
        <text>guanosine(37) in tRNA + S-adenosyl-L-methionine = N(1)-methylguanosine(37) in tRNA + S-adenosyl-L-homocysteine + H(+)</text>
        <dbReference type="Rhea" id="RHEA:36899"/>
        <dbReference type="Rhea" id="RHEA-COMP:10145"/>
        <dbReference type="Rhea" id="RHEA-COMP:10147"/>
        <dbReference type="ChEBI" id="CHEBI:15378"/>
        <dbReference type="ChEBI" id="CHEBI:57856"/>
        <dbReference type="ChEBI" id="CHEBI:59789"/>
        <dbReference type="ChEBI" id="CHEBI:73542"/>
        <dbReference type="ChEBI" id="CHEBI:74269"/>
        <dbReference type="EC" id="2.1.1.228"/>
    </reaction>
</comment>
<comment type="subunit">
    <text evidence="1">Homodimer.</text>
</comment>
<comment type="subcellular location">
    <subcellularLocation>
        <location evidence="1">Cytoplasm</location>
    </subcellularLocation>
</comment>
<comment type="similarity">
    <text evidence="1">Belongs to the RNA methyltransferase TrmD family.</text>
</comment>
<evidence type="ECO:0000255" key="1">
    <source>
        <dbReference type="HAMAP-Rule" id="MF_00605"/>
    </source>
</evidence>
<protein>
    <recommendedName>
        <fullName evidence="1">tRNA (guanine-N(1)-)-methyltransferase</fullName>
        <ecNumber evidence="1">2.1.1.228</ecNumber>
    </recommendedName>
    <alternativeName>
        <fullName evidence="1">M1G-methyltransferase</fullName>
    </alternativeName>
    <alternativeName>
        <fullName evidence="1">tRNA [GM37] methyltransferase</fullName>
    </alternativeName>
</protein>
<sequence>MGNLRVDVITLFPEMFSAITEYGITSRAVKQGLLQVICWNPRDYTTDRHHTVDDRPFGGGPGMVMKIKPLEDALVSARQATGAAAKVIYLSPQGRKLTQQAVKGLAEQESLILIAGRYEGIDERFIEAHVDEEWSIGDYVLSGGELPAMVLIDAVTRLLPGALGHVDSAEEDSFTDGLLDCPHYTRPEVYADQRVPDVLLSGNHAHIRRWRMKQSLGRTFERRADLLESRSLSGEEKKLLEEYLRERDDS</sequence>
<accession>A5W8C1</accession>
<gene>
    <name evidence="1" type="primary">trmD</name>
    <name type="ordered locus">Pput_4257</name>
</gene>